<evidence type="ECO:0000255" key="1">
    <source>
        <dbReference type="HAMAP-Rule" id="MF_01458"/>
    </source>
</evidence>
<comment type="function">
    <text evidence="1">Acts as a processive, ATP-dependent zinc metallopeptidase for both cytoplasmic and membrane proteins. Plays a role in the quality control of integral membrane proteins.</text>
</comment>
<comment type="cofactor">
    <cofactor evidence="1">
        <name>Zn(2+)</name>
        <dbReference type="ChEBI" id="CHEBI:29105"/>
    </cofactor>
    <text evidence="1">Binds 1 zinc ion per subunit.</text>
</comment>
<comment type="subunit">
    <text evidence="1">Homohexamer.</text>
</comment>
<comment type="subcellular location">
    <subcellularLocation>
        <location evidence="1">Cell inner membrane</location>
        <topology evidence="1">Multi-pass membrane protein</topology>
        <orientation evidence="1">Cytoplasmic side</orientation>
    </subcellularLocation>
</comment>
<comment type="similarity">
    <text evidence="1">In the central section; belongs to the AAA ATPase family.</text>
</comment>
<comment type="similarity">
    <text evidence="1">In the C-terminal section; belongs to the peptidase M41 family.</text>
</comment>
<keyword id="KW-0067">ATP-binding</keyword>
<keyword id="KW-0997">Cell inner membrane</keyword>
<keyword id="KW-1003">Cell membrane</keyword>
<keyword id="KW-0378">Hydrolase</keyword>
<keyword id="KW-0472">Membrane</keyword>
<keyword id="KW-0479">Metal-binding</keyword>
<keyword id="KW-0482">Metalloprotease</keyword>
<keyword id="KW-0547">Nucleotide-binding</keyword>
<keyword id="KW-0645">Protease</keyword>
<keyword id="KW-0812">Transmembrane</keyword>
<keyword id="KW-1133">Transmembrane helix</keyword>
<keyword id="KW-0862">Zinc</keyword>
<proteinExistence type="inferred from homology"/>
<dbReference type="EC" id="3.4.24.-" evidence="1"/>
<dbReference type="EMBL" id="CP000879">
    <property type="protein sequence ID" value="ABX31596.1"/>
    <property type="molecule type" value="Genomic_DNA"/>
</dbReference>
<dbReference type="RefSeq" id="WP_012208699.1">
    <property type="nucleotide sequence ID" value="NC_010003.1"/>
</dbReference>
<dbReference type="SMR" id="A9BJK3"/>
<dbReference type="STRING" id="403833.Pmob_0873"/>
<dbReference type="MEROPS" id="M41.021"/>
<dbReference type="KEGG" id="pmo:Pmob_0873"/>
<dbReference type="eggNOG" id="COG0465">
    <property type="taxonomic scope" value="Bacteria"/>
</dbReference>
<dbReference type="HOGENOM" id="CLU_000688_16_2_0"/>
<dbReference type="OrthoDB" id="9809379at2"/>
<dbReference type="Proteomes" id="UP000000789">
    <property type="component" value="Chromosome"/>
</dbReference>
<dbReference type="GO" id="GO:0005886">
    <property type="term" value="C:plasma membrane"/>
    <property type="evidence" value="ECO:0007669"/>
    <property type="project" value="UniProtKB-SubCell"/>
</dbReference>
<dbReference type="GO" id="GO:0005524">
    <property type="term" value="F:ATP binding"/>
    <property type="evidence" value="ECO:0007669"/>
    <property type="project" value="UniProtKB-UniRule"/>
</dbReference>
<dbReference type="GO" id="GO:0016887">
    <property type="term" value="F:ATP hydrolysis activity"/>
    <property type="evidence" value="ECO:0007669"/>
    <property type="project" value="UniProtKB-UniRule"/>
</dbReference>
<dbReference type="GO" id="GO:0004176">
    <property type="term" value="F:ATP-dependent peptidase activity"/>
    <property type="evidence" value="ECO:0007669"/>
    <property type="project" value="InterPro"/>
</dbReference>
<dbReference type="GO" id="GO:0004222">
    <property type="term" value="F:metalloendopeptidase activity"/>
    <property type="evidence" value="ECO:0007669"/>
    <property type="project" value="InterPro"/>
</dbReference>
<dbReference type="GO" id="GO:0008270">
    <property type="term" value="F:zinc ion binding"/>
    <property type="evidence" value="ECO:0007669"/>
    <property type="project" value="UniProtKB-UniRule"/>
</dbReference>
<dbReference type="GO" id="GO:0030163">
    <property type="term" value="P:protein catabolic process"/>
    <property type="evidence" value="ECO:0007669"/>
    <property type="project" value="UniProtKB-UniRule"/>
</dbReference>
<dbReference type="GO" id="GO:0006508">
    <property type="term" value="P:proteolysis"/>
    <property type="evidence" value="ECO:0007669"/>
    <property type="project" value="UniProtKB-KW"/>
</dbReference>
<dbReference type="CDD" id="cd19501">
    <property type="entry name" value="RecA-like_FtsH"/>
    <property type="match status" value="1"/>
</dbReference>
<dbReference type="FunFam" id="1.10.8.60:FF:000001">
    <property type="entry name" value="ATP-dependent zinc metalloprotease FtsH"/>
    <property type="match status" value="1"/>
</dbReference>
<dbReference type="FunFam" id="1.20.58.760:FF:000001">
    <property type="entry name" value="ATP-dependent zinc metalloprotease FtsH"/>
    <property type="match status" value="1"/>
</dbReference>
<dbReference type="FunFam" id="3.40.50.300:FF:000001">
    <property type="entry name" value="ATP-dependent zinc metalloprotease FtsH"/>
    <property type="match status" value="1"/>
</dbReference>
<dbReference type="Gene3D" id="1.10.8.60">
    <property type="match status" value="1"/>
</dbReference>
<dbReference type="Gene3D" id="3.30.720.210">
    <property type="match status" value="1"/>
</dbReference>
<dbReference type="Gene3D" id="3.40.50.300">
    <property type="entry name" value="P-loop containing nucleotide triphosphate hydrolases"/>
    <property type="match status" value="1"/>
</dbReference>
<dbReference type="Gene3D" id="1.20.58.760">
    <property type="entry name" value="Peptidase M41"/>
    <property type="match status" value="1"/>
</dbReference>
<dbReference type="HAMAP" id="MF_01458">
    <property type="entry name" value="FtsH"/>
    <property type="match status" value="1"/>
</dbReference>
<dbReference type="InterPro" id="IPR003593">
    <property type="entry name" value="AAA+_ATPase"/>
</dbReference>
<dbReference type="InterPro" id="IPR041569">
    <property type="entry name" value="AAA_lid_3"/>
</dbReference>
<dbReference type="InterPro" id="IPR003959">
    <property type="entry name" value="ATPase_AAA_core"/>
</dbReference>
<dbReference type="InterPro" id="IPR003960">
    <property type="entry name" value="ATPase_AAA_CS"/>
</dbReference>
<dbReference type="InterPro" id="IPR005936">
    <property type="entry name" value="FtsH"/>
</dbReference>
<dbReference type="InterPro" id="IPR027417">
    <property type="entry name" value="P-loop_NTPase"/>
</dbReference>
<dbReference type="InterPro" id="IPR011546">
    <property type="entry name" value="Pept_M41_FtsH_extracell"/>
</dbReference>
<dbReference type="InterPro" id="IPR000642">
    <property type="entry name" value="Peptidase_M41"/>
</dbReference>
<dbReference type="InterPro" id="IPR037219">
    <property type="entry name" value="Peptidase_M41-like"/>
</dbReference>
<dbReference type="NCBIfam" id="TIGR01241">
    <property type="entry name" value="FtsH_fam"/>
    <property type="match status" value="1"/>
</dbReference>
<dbReference type="PANTHER" id="PTHR23076:SF97">
    <property type="entry name" value="ATP-DEPENDENT ZINC METALLOPROTEASE YME1L1"/>
    <property type="match status" value="1"/>
</dbReference>
<dbReference type="PANTHER" id="PTHR23076">
    <property type="entry name" value="METALLOPROTEASE M41 FTSH"/>
    <property type="match status" value="1"/>
</dbReference>
<dbReference type="Pfam" id="PF00004">
    <property type="entry name" value="AAA"/>
    <property type="match status" value="1"/>
</dbReference>
<dbReference type="Pfam" id="PF17862">
    <property type="entry name" value="AAA_lid_3"/>
    <property type="match status" value="1"/>
</dbReference>
<dbReference type="Pfam" id="PF06480">
    <property type="entry name" value="FtsH_ext"/>
    <property type="match status" value="1"/>
</dbReference>
<dbReference type="Pfam" id="PF01434">
    <property type="entry name" value="Peptidase_M41"/>
    <property type="match status" value="1"/>
</dbReference>
<dbReference type="SMART" id="SM00382">
    <property type="entry name" value="AAA"/>
    <property type="match status" value="1"/>
</dbReference>
<dbReference type="SUPFAM" id="SSF140990">
    <property type="entry name" value="FtsH protease domain-like"/>
    <property type="match status" value="1"/>
</dbReference>
<dbReference type="SUPFAM" id="SSF52540">
    <property type="entry name" value="P-loop containing nucleoside triphosphate hydrolases"/>
    <property type="match status" value="1"/>
</dbReference>
<dbReference type="PROSITE" id="PS00674">
    <property type="entry name" value="AAA"/>
    <property type="match status" value="1"/>
</dbReference>
<reference key="1">
    <citation type="submission" date="2007-11" db="EMBL/GenBank/DDBJ databases">
        <title>Complete sequence of Petroga mobilis SJ95.</title>
        <authorList>
            <consortium name="US DOE Joint Genome Institute"/>
            <person name="Copeland A."/>
            <person name="Lucas S."/>
            <person name="Lapidus A."/>
            <person name="Barry K."/>
            <person name="Glavina del Rio T."/>
            <person name="Dalin E."/>
            <person name="Tice H."/>
            <person name="Pitluck S."/>
            <person name="Meincke L."/>
            <person name="Brettin T."/>
            <person name="Bruce D."/>
            <person name="Detter J.C."/>
            <person name="Han C."/>
            <person name="Kuske C.R."/>
            <person name="Schmutz J."/>
            <person name="Larimer F."/>
            <person name="Land M."/>
            <person name="Hauser L."/>
            <person name="Kyrpides N."/>
            <person name="Mikhailova N."/>
            <person name="Noll K."/>
            <person name="Richardson P."/>
        </authorList>
    </citation>
    <scope>NUCLEOTIDE SEQUENCE [LARGE SCALE GENOMIC DNA]</scope>
    <source>
        <strain>DSM 10674 / SJ95</strain>
    </source>
</reference>
<organism>
    <name type="scientific">Petrotoga mobilis (strain DSM 10674 / SJ95)</name>
    <dbReference type="NCBI Taxonomy" id="403833"/>
    <lineage>
        <taxon>Bacteria</taxon>
        <taxon>Thermotogati</taxon>
        <taxon>Thermotogota</taxon>
        <taxon>Thermotogae</taxon>
        <taxon>Petrotogales</taxon>
        <taxon>Petrotogaceae</taxon>
        <taxon>Petrotoga</taxon>
    </lineage>
</organism>
<gene>
    <name evidence="1" type="primary">ftsH3</name>
    <name type="ordered locus">Pmob_0873</name>
</gene>
<feature type="chain" id="PRO_0000400371" description="ATP-dependent zinc metalloprotease FtsH 3">
    <location>
        <begin position="1"/>
        <end position="645"/>
    </location>
</feature>
<feature type="topological domain" description="Cytoplasmic" evidence="1">
    <location>
        <begin position="1"/>
        <end position="11"/>
    </location>
</feature>
<feature type="transmembrane region" description="Helical" evidence="1">
    <location>
        <begin position="12"/>
        <end position="32"/>
    </location>
</feature>
<feature type="topological domain" description="Periplasmic" evidence="1">
    <location>
        <begin position="33"/>
        <end position="110"/>
    </location>
</feature>
<feature type="transmembrane region" description="Helical" evidence="1">
    <location>
        <begin position="111"/>
        <end position="131"/>
    </location>
</feature>
<feature type="topological domain" description="Cytoplasmic" evidence="1">
    <location>
        <begin position="132"/>
        <end position="645"/>
    </location>
</feature>
<feature type="active site" evidence="1">
    <location>
        <position position="425"/>
    </location>
</feature>
<feature type="binding site" evidence="1">
    <location>
        <begin position="202"/>
        <end position="209"/>
    </location>
    <ligand>
        <name>ATP</name>
        <dbReference type="ChEBI" id="CHEBI:30616"/>
    </ligand>
</feature>
<feature type="binding site" evidence="1">
    <location>
        <position position="424"/>
    </location>
    <ligand>
        <name>Zn(2+)</name>
        <dbReference type="ChEBI" id="CHEBI:29105"/>
        <note>catalytic</note>
    </ligand>
</feature>
<feature type="binding site" evidence="1">
    <location>
        <position position="428"/>
    </location>
    <ligand>
        <name>Zn(2+)</name>
        <dbReference type="ChEBI" id="CHEBI:29105"/>
        <note>catalytic</note>
    </ligand>
</feature>
<feature type="binding site" evidence="1">
    <location>
        <position position="501"/>
    </location>
    <ligand>
        <name>Zn(2+)</name>
        <dbReference type="ChEBI" id="CHEBI:29105"/>
        <note>catalytic</note>
    </ligand>
</feature>
<protein>
    <recommendedName>
        <fullName evidence="1">ATP-dependent zinc metalloprotease FtsH 3</fullName>
        <ecNumber evidence="1">3.4.24.-</ecNumber>
    </recommendedName>
</protein>
<name>FTSH3_PETMO</name>
<accession>A9BJK3</accession>
<sequence length="645" mass="72190">MQNKRNQSRVLWLLLIYITIGIFIYVGVNSLIGTPDVSKIEYSELVQMLEDKKIVSLEIEDSGYARARDNRGLYYETYAPTLLSDQQYVYGLANQGIEIKYVRSLENSWWISILTFLLPVFLLIFLFTFLFRSSGGGANQGMNFIKSPAKKYDPKKTRTTFNDVAGVKEAKEELTDVVKFLKDPKVFNRLGARMPKGVLLVGEPGTGKTLLARAVAGEAGVPFFYISGSDFVELFVGVGAARVRDLFNQAKANAPAIIFIDEIDAVGRQRGSGLGGGHDEREQTLNSILVEMDGFDPSIGIIVMAATNRPDVLDKALLRPGRFDKKVVIDRPDAEGRKDILKIHFRGKKIAPDVDLEVLARATPGFVGADLENLVNEAALLAARNGEKFITMKDCEEAIERVIVGPERKTRVLSEQEKEVVAYHELGHAILGTILPNADPVHKVTIIPRGYAALGYTLQLPSEDRYLMNKSEILDDIAVMLAGRAAEEIIFDEITSGAENDLKRATEMARRMVESFGMSEKIGPVAWASESEETFLARELFREKNYSDETAKELDSEVKQIINKSYEKAKSVLLENKEKLQFIAQYLLKKETISGQELRDLLQKDTDDLKEYVENLGVSSTQEEAKVVNYEYLSRENNLIERKGI</sequence>